<reference key="1">
    <citation type="submission" date="2006-01" db="EMBL/GenBank/DDBJ databases">
        <title>Cloning and sequencing of interleukin-1 beta (IL-1b) from cDNA libraries of Alaskan pinniped species: Steller sea lion (Eumetopias jubatus) harbor seal (Phoca vitulina richardsi) and ringed seal (Phoca hispida).</title>
        <authorList>
            <person name="Bozza M."/>
            <person name="Atkinson S."/>
        </authorList>
    </citation>
    <scope>NUCLEOTIDE SEQUENCE [MRNA]</scope>
</reference>
<organism>
    <name type="scientific">Pusa hispida</name>
    <name type="common">Ringed seal</name>
    <name type="synonym">Phoca hispida</name>
    <dbReference type="NCBI Taxonomy" id="9718"/>
    <lineage>
        <taxon>Eukaryota</taxon>
        <taxon>Metazoa</taxon>
        <taxon>Chordata</taxon>
        <taxon>Craniata</taxon>
        <taxon>Vertebrata</taxon>
        <taxon>Euteleostomi</taxon>
        <taxon>Mammalia</taxon>
        <taxon>Eutheria</taxon>
        <taxon>Laurasiatheria</taxon>
        <taxon>Carnivora</taxon>
        <taxon>Caniformia</taxon>
        <taxon>Pinnipedia</taxon>
        <taxon>Phocidae</taxon>
        <taxon>Phocinae</taxon>
        <taxon>Pusa</taxon>
    </lineage>
</organism>
<evidence type="ECO:0000250" key="1"/>
<evidence type="ECO:0000250" key="2">
    <source>
        <dbReference type="UniProtKB" id="P01584"/>
    </source>
</evidence>
<evidence type="ECO:0000250" key="3">
    <source>
        <dbReference type="UniProtKB" id="P10749"/>
    </source>
</evidence>
<evidence type="ECO:0000305" key="4"/>
<dbReference type="EMBL" id="DQ358051">
    <property type="protein sequence ID" value="ABC87314.1"/>
    <property type="molecule type" value="mRNA"/>
</dbReference>
<dbReference type="SMR" id="Q2HZH0"/>
<dbReference type="GO" id="GO:0005829">
    <property type="term" value="C:cytosol"/>
    <property type="evidence" value="ECO:0007669"/>
    <property type="project" value="UniProtKB-SubCell"/>
</dbReference>
<dbReference type="GO" id="GO:0005615">
    <property type="term" value="C:extracellular space"/>
    <property type="evidence" value="ECO:0007669"/>
    <property type="project" value="UniProtKB-KW"/>
</dbReference>
<dbReference type="GO" id="GO:0005764">
    <property type="term" value="C:lysosome"/>
    <property type="evidence" value="ECO:0007669"/>
    <property type="project" value="UniProtKB-SubCell"/>
</dbReference>
<dbReference type="GO" id="GO:0005125">
    <property type="term" value="F:cytokine activity"/>
    <property type="evidence" value="ECO:0007669"/>
    <property type="project" value="UniProtKB-KW"/>
</dbReference>
<dbReference type="GO" id="GO:0005178">
    <property type="term" value="F:integrin binding"/>
    <property type="evidence" value="ECO:0000250"/>
    <property type="project" value="UniProtKB"/>
</dbReference>
<dbReference type="GO" id="GO:0005149">
    <property type="term" value="F:interleukin-1 receptor binding"/>
    <property type="evidence" value="ECO:0007669"/>
    <property type="project" value="InterPro"/>
</dbReference>
<dbReference type="GO" id="GO:0071222">
    <property type="term" value="P:cellular response to lipopolysaccharide"/>
    <property type="evidence" value="ECO:0007669"/>
    <property type="project" value="TreeGrafter"/>
</dbReference>
<dbReference type="GO" id="GO:0019221">
    <property type="term" value="P:cytokine-mediated signaling pathway"/>
    <property type="evidence" value="ECO:0007669"/>
    <property type="project" value="TreeGrafter"/>
</dbReference>
<dbReference type="GO" id="GO:0001660">
    <property type="term" value="P:fever generation"/>
    <property type="evidence" value="ECO:0007669"/>
    <property type="project" value="UniProtKB-KW"/>
</dbReference>
<dbReference type="GO" id="GO:0006955">
    <property type="term" value="P:immune response"/>
    <property type="evidence" value="ECO:0007669"/>
    <property type="project" value="InterPro"/>
</dbReference>
<dbReference type="GO" id="GO:0051781">
    <property type="term" value="P:positive regulation of cell division"/>
    <property type="evidence" value="ECO:0007669"/>
    <property type="project" value="UniProtKB-KW"/>
</dbReference>
<dbReference type="GO" id="GO:0033092">
    <property type="term" value="P:positive regulation of immature T cell proliferation in thymus"/>
    <property type="evidence" value="ECO:0007669"/>
    <property type="project" value="TreeGrafter"/>
</dbReference>
<dbReference type="GO" id="GO:2000556">
    <property type="term" value="P:positive regulation of T-helper 1 cell cytokine production"/>
    <property type="evidence" value="ECO:0000250"/>
    <property type="project" value="UniProtKB"/>
</dbReference>
<dbReference type="GO" id="GO:0032729">
    <property type="term" value="P:positive regulation of type II interferon production"/>
    <property type="evidence" value="ECO:0000250"/>
    <property type="project" value="UniProtKB"/>
</dbReference>
<dbReference type="GO" id="GO:0010573">
    <property type="term" value="P:vascular endothelial growth factor production"/>
    <property type="evidence" value="ECO:0000250"/>
    <property type="project" value="UniProtKB"/>
</dbReference>
<dbReference type="CDD" id="cd23296">
    <property type="entry name" value="beta-trefoil_IL1B"/>
    <property type="match status" value="1"/>
</dbReference>
<dbReference type="FunFam" id="2.80.10.50:FF:000027">
    <property type="entry name" value="Interleukin-1 beta"/>
    <property type="match status" value="1"/>
</dbReference>
<dbReference type="Gene3D" id="2.80.10.50">
    <property type="match status" value="1"/>
</dbReference>
<dbReference type="InterPro" id="IPR020877">
    <property type="entry name" value="IL-1_CS"/>
</dbReference>
<dbReference type="InterPro" id="IPR000975">
    <property type="entry name" value="IL-1_fam"/>
</dbReference>
<dbReference type="InterPro" id="IPR003502">
    <property type="entry name" value="IL-1_propep"/>
</dbReference>
<dbReference type="InterPro" id="IPR008996">
    <property type="entry name" value="IL1/FGF"/>
</dbReference>
<dbReference type="PANTHER" id="PTHR10078:SF30">
    <property type="entry name" value="INTERLEUKIN-1 BETA"/>
    <property type="match status" value="1"/>
</dbReference>
<dbReference type="PANTHER" id="PTHR10078">
    <property type="entry name" value="INTERLEUKIN-1 FAMILY MEMBER"/>
    <property type="match status" value="1"/>
</dbReference>
<dbReference type="Pfam" id="PF00340">
    <property type="entry name" value="IL1"/>
    <property type="match status" value="1"/>
</dbReference>
<dbReference type="Pfam" id="PF02394">
    <property type="entry name" value="IL1_propep"/>
    <property type="match status" value="1"/>
</dbReference>
<dbReference type="PRINTS" id="PR00262">
    <property type="entry name" value="IL1HBGF"/>
</dbReference>
<dbReference type="PRINTS" id="PR00264">
    <property type="entry name" value="INTERLEUKIN1"/>
</dbReference>
<dbReference type="PRINTS" id="PR01359">
    <property type="entry name" value="INTRLEUKIN1B"/>
</dbReference>
<dbReference type="PRINTS" id="PR01357">
    <property type="entry name" value="INTRLEUKN1AB"/>
</dbReference>
<dbReference type="SMART" id="SM00125">
    <property type="entry name" value="IL1"/>
    <property type="match status" value="1"/>
</dbReference>
<dbReference type="SUPFAM" id="SSF50353">
    <property type="entry name" value="Cytokine"/>
    <property type="match status" value="1"/>
</dbReference>
<dbReference type="PROSITE" id="PS00253">
    <property type="entry name" value="INTERLEUKIN_1"/>
    <property type="match status" value="1"/>
</dbReference>
<comment type="function">
    <text evidence="2">Potent pro-inflammatory cytokine. Initially discovered as the major endogenous pyrogen, induces prostaglandin synthesis, neutrophil influx and activation, T-cell activation and cytokine production, B-cell activation and antibody production, and fibroblast proliferation and collagen production. Promotes Th17 differentiation of T-cells. Synergizes with IL12/interleukin-12 to induce IFNG synthesis from T-helper 1 (Th1) cells. Plays a role in angiogenesis by inducing VEGF production synergistically with TNF and IL6. Involved in transduction of inflammation downstream of pyroptosis: its mature form is specifically released in the extracellular milieu by passing through the gasdermin-D (GSDMD) pore.</text>
</comment>
<comment type="subunit">
    <text evidence="2">Monomer. In its precursor form, weakly interacts with full-length MEFV; the mature cytokine does not interact at all. Interacts with integrins ITGAV:ITGBV and ITGA5:ITGB1; integrin-binding is required for IL1B signaling. Interacts with cargo receptor TMED10; the interaction is direct and is required for the secretion of IL1B mature form. Interacts with HSP90AB1; the interaction facilitates cargo translocation into the ERGIC. Interacts with HSP90B1; the interaction facilitates cargo translocation into the ERGIC.</text>
</comment>
<comment type="subcellular location">
    <subcellularLocation>
        <location evidence="2">Cytoplasm</location>
        <location evidence="2">Cytosol</location>
    </subcellularLocation>
    <subcellularLocation>
        <location evidence="2">Secreted</location>
    </subcellularLocation>
    <subcellularLocation>
        <location evidence="2">Lysosome</location>
    </subcellularLocation>
    <subcellularLocation>
        <location evidence="3">Secreted</location>
        <location evidence="3">Extracellular exosome</location>
    </subcellularLocation>
    <text evidence="2">The precursor is cytosolic. In response to inflammasome-activating signals, such as ATP for NLRP3 inflammasome or bacterial flagellin for NLRC4 inflammasome, cleaved and secreted. Mature form is secreted and released in the extracellular milieu by passing through the gasdermin-D (GSDMD) pore. In contrast, the precursor form is not released, due to the presence of an acidic region that is proteolytically removed by CASP1 during maturation. The secretion is dependent on protein unfolding and facilitated by the cargo receptor TMED10.</text>
</comment>
<comment type="miscellaneous">
    <text evidence="1">IL1B production occurs in 2 steps, each being controlled by different stimuli. First, inflammatory signals, such as LPS, stimulate the synthesis and promote the accumulation of cytosolic stores of pro-IL1B (priming). Then additional signals are required for inflammasome assembly, leading to CASP1 activation, pro-IL1B processing and eventually secretion of the active cytokine. IL1B processing and secretion are temporarily associated.</text>
</comment>
<comment type="similarity">
    <text evidence="4">Belongs to the IL-1 family.</text>
</comment>
<keyword id="KW-0202">Cytokine</keyword>
<keyword id="KW-0963">Cytoplasm</keyword>
<keyword id="KW-0395">Inflammatory response</keyword>
<keyword id="KW-0458">Lysosome</keyword>
<keyword id="KW-0497">Mitogen</keyword>
<keyword id="KW-0666">Pyrogen</keyword>
<keyword id="KW-0964">Secreted</keyword>
<sequence length="270" mass="31053">MATVPEPTSEMMSYYYSDNENDLFFEADGPRKMKCCFQDLNNSSLKDEGIQLHISHQLQNKSLRHFVSVVVALEKLKKISLPCSQPLQDDDLKNVFCCIFEEEPIVCEVYDDDAFVCDAPLQSLDCKFRDKNQKSLVLYNSYELRALHLNGSSVNQQAVFRMSFLQGDENSNKIPVALCIKEKNLYLSCVMKDGKPTLQLEMLDPRVYPKKKMEKRFVFNKTEVKKILEFESSQFPNWYISTSKAEAMPVFLGNTKGGQDITDFTMEFSS</sequence>
<name>IL1B_PUSHI</name>
<feature type="propeptide" id="PRO_0000253758" evidence="1">
    <location>
        <begin position="1"/>
        <end position="118"/>
    </location>
</feature>
<feature type="chain" id="PRO_0000253759" description="Interleukin-1 beta">
    <location>
        <begin position="119"/>
        <end position="270"/>
    </location>
</feature>
<feature type="site" description="Important for interaction with integrin" evidence="2">
    <location>
        <position position="173"/>
    </location>
</feature>
<feature type="site" description="Important for interaction with integrin" evidence="2">
    <location>
        <position position="181"/>
    </location>
</feature>
<feature type="site" description="Important for interaction with integrin" evidence="2">
    <location>
        <position position="183"/>
    </location>
</feature>
<feature type="site" description="Important for interaction with integrin" evidence="2">
    <location>
        <position position="192"/>
    </location>
</feature>
<protein>
    <recommendedName>
        <fullName>Interleukin-1 beta</fullName>
        <shortName>IL-1 beta</shortName>
    </recommendedName>
</protein>
<proteinExistence type="evidence at transcript level"/>
<gene>
    <name type="primary">IL1B</name>
</gene>
<accession>Q2HZH0</accession>